<sequence length="394" mass="43254">MSKEKFERSKPHVNVGTIGHVDHGKTTLTAAITTVLAKVYGGAAKDFAAIDNAPEEKERGITISTSHVEYDTPTRHYAHVDCPGHADYVKNMITGAAQMDGAILVVAATDGPMPQTREHILLSRQVGVPFIVVFMNKCDMVDDEELLELVEMEVRELLSEYDFPGDDLPVIQGSALKALEGDEEWSKKIVELADALDNYIPEPERDIDKPFIMPIEDVFSISGRGTVVTGRVERGIVRTGDECEIVGMKDTTKTTVTGVEMFRKLLDEGRAGENIGALLRGTKRDDVERGQVLAKPGTITPHTKFEAEVYVLSKDEGGRHTPFFKGYRPQFYFRTTDVTGAVELPEGVEMVMPGDNLKFVVDLIAPIAMDEGLRFAIREGGRTVGAGVVSKIMD</sequence>
<reference key="1">
    <citation type="journal article" date="2004" name="Proc. Natl. Acad. Sci. U.S.A.">
        <title>Genome sequence of the deep-sea gamma-proteobacterium Idiomarina loihiensis reveals amino acid fermentation as a source of carbon and energy.</title>
        <authorList>
            <person name="Hou S."/>
            <person name="Saw J.H."/>
            <person name="Lee K.S."/>
            <person name="Freitas T.A."/>
            <person name="Belisle C."/>
            <person name="Kawarabayasi Y."/>
            <person name="Donachie S.P."/>
            <person name="Pikina A."/>
            <person name="Galperin M.Y."/>
            <person name="Koonin E.V."/>
            <person name="Makarova K.S."/>
            <person name="Omelchenko M.V."/>
            <person name="Sorokin A."/>
            <person name="Wolf Y.I."/>
            <person name="Li Q.X."/>
            <person name="Keum Y.S."/>
            <person name="Campbell S."/>
            <person name="Denery J."/>
            <person name="Aizawa S."/>
            <person name="Shibata S."/>
            <person name="Malahoff A."/>
            <person name="Alam M."/>
        </authorList>
    </citation>
    <scope>NUCLEOTIDE SEQUENCE [LARGE SCALE GENOMIC DNA]</scope>
    <source>
        <strain>ATCC BAA-735 / DSM 15497 / L2-TR</strain>
    </source>
</reference>
<gene>
    <name evidence="2" type="primary">tuf1</name>
    <name type="synonym">tufB_1</name>
    <name type="ordered locus">IL0338</name>
</gene>
<gene>
    <name evidence="2" type="primary">tuf2</name>
    <name type="synonym">tufB_2</name>
    <name type="ordered locus">IL0350</name>
</gene>
<accession>Q5QWA3</accession>
<comment type="function">
    <text evidence="2">GTP hydrolase that promotes the GTP-dependent binding of aminoacyl-tRNA to the A-site of ribosomes during protein biosynthesis.</text>
</comment>
<comment type="catalytic activity">
    <reaction evidence="2">
        <text>GTP + H2O = GDP + phosphate + H(+)</text>
        <dbReference type="Rhea" id="RHEA:19669"/>
        <dbReference type="ChEBI" id="CHEBI:15377"/>
        <dbReference type="ChEBI" id="CHEBI:15378"/>
        <dbReference type="ChEBI" id="CHEBI:37565"/>
        <dbReference type="ChEBI" id="CHEBI:43474"/>
        <dbReference type="ChEBI" id="CHEBI:58189"/>
        <dbReference type="EC" id="3.6.5.3"/>
    </reaction>
    <physiologicalReaction direction="left-to-right" evidence="2">
        <dbReference type="Rhea" id="RHEA:19670"/>
    </physiologicalReaction>
</comment>
<comment type="subunit">
    <text evidence="2">Monomer.</text>
</comment>
<comment type="subcellular location">
    <subcellularLocation>
        <location evidence="2">Cytoplasm</location>
    </subcellularLocation>
</comment>
<comment type="similarity">
    <text evidence="2">Belongs to the TRAFAC class translation factor GTPase superfamily. Classic translation factor GTPase family. EF-Tu/EF-1A subfamily.</text>
</comment>
<organism>
    <name type="scientific">Idiomarina loihiensis (strain ATCC BAA-735 / DSM 15497 / L2-TR)</name>
    <dbReference type="NCBI Taxonomy" id="283942"/>
    <lineage>
        <taxon>Bacteria</taxon>
        <taxon>Pseudomonadati</taxon>
        <taxon>Pseudomonadota</taxon>
        <taxon>Gammaproteobacteria</taxon>
        <taxon>Alteromonadales</taxon>
        <taxon>Idiomarinaceae</taxon>
        <taxon>Idiomarina</taxon>
    </lineage>
</organism>
<feature type="chain" id="PRO_0000337408" description="Elongation factor Tu">
    <location>
        <begin position="1"/>
        <end position="394"/>
    </location>
</feature>
<feature type="domain" description="tr-type G">
    <location>
        <begin position="10"/>
        <end position="204"/>
    </location>
</feature>
<feature type="region of interest" description="G1" evidence="1">
    <location>
        <begin position="19"/>
        <end position="26"/>
    </location>
</feature>
<feature type="region of interest" description="G2" evidence="1">
    <location>
        <begin position="60"/>
        <end position="64"/>
    </location>
</feature>
<feature type="region of interest" description="G3" evidence="1">
    <location>
        <begin position="81"/>
        <end position="84"/>
    </location>
</feature>
<feature type="region of interest" description="G4" evidence="1">
    <location>
        <begin position="136"/>
        <end position="139"/>
    </location>
</feature>
<feature type="region of interest" description="G5" evidence="1">
    <location>
        <begin position="174"/>
        <end position="176"/>
    </location>
</feature>
<feature type="binding site" evidence="2">
    <location>
        <begin position="19"/>
        <end position="26"/>
    </location>
    <ligand>
        <name>GTP</name>
        <dbReference type="ChEBI" id="CHEBI:37565"/>
    </ligand>
</feature>
<feature type="binding site" evidence="2">
    <location>
        <position position="26"/>
    </location>
    <ligand>
        <name>Mg(2+)</name>
        <dbReference type="ChEBI" id="CHEBI:18420"/>
    </ligand>
</feature>
<feature type="binding site" evidence="2">
    <location>
        <begin position="81"/>
        <end position="85"/>
    </location>
    <ligand>
        <name>GTP</name>
        <dbReference type="ChEBI" id="CHEBI:37565"/>
    </ligand>
</feature>
<feature type="binding site" evidence="2">
    <location>
        <begin position="136"/>
        <end position="139"/>
    </location>
    <ligand>
        <name>GTP</name>
        <dbReference type="ChEBI" id="CHEBI:37565"/>
    </ligand>
</feature>
<dbReference type="EC" id="3.6.5.3" evidence="2"/>
<dbReference type="EMBL" id="AE017340">
    <property type="protein sequence ID" value="AAV81181.1"/>
    <property type="molecule type" value="Genomic_DNA"/>
</dbReference>
<dbReference type="EMBL" id="AE017340">
    <property type="protein sequence ID" value="AAV81193.1"/>
    <property type="molecule type" value="Genomic_DNA"/>
</dbReference>
<dbReference type="RefSeq" id="WP_011233600.1">
    <property type="nucleotide sequence ID" value="NC_006512.1"/>
</dbReference>
<dbReference type="SMR" id="Q5QWA3"/>
<dbReference type="STRING" id="283942.IL0338"/>
<dbReference type="GeneID" id="41335502"/>
<dbReference type="KEGG" id="ilo:IL0338"/>
<dbReference type="KEGG" id="ilo:IL0350"/>
<dbReference type="eggNOG" id="COG0050">
    <property type="taxonomic scope" value="Bacteria"/>
</dbReference>
<dbReference type="HOGENOM" id="CLU_007265_0_0_6"/>
<dbReference type="OrthoDB" id="9803139at2"/>
<dbReference type="Proteomes" id="UP000001171">
    <property type="component" value="Chromosome"/>
</dbReference>
<dbReference type="GO" id="GO:0005829">
    <property type="term" value="C:cytosol"/>
    <property type="evidence" value="ECO:0007669"/>
    <property type="project" value="TreeGrafter"/>
</dbReference>
<dbReference type="GO" id="GO:0005525">
    <property type="term" value="F:GTP binding"/>
    <property type="evidence" value="ECO:0007669"/>
    <property type="project" value="UniProtKB-UniRule"/>
</dbReference>
<dbReference type="GO" id="GO:0003924">
    <property type="term" value="F:GTPase activity"/>
    <property type="evidence" value="ECO:0007669"/>
    <property type="project" value="InterPro"/>
</dbReference>
<dbReference type="GO" id="GO:0097216">
    <property type="term" value="F:guanosine tetraphosphate binding"/>
    <property type="evidence" value="ECO:0007669"/>
    <property type="project" value="UniProtKB-ARBA"/>
</dbReference>
<dbReference type="GO" id="GO:0003746">
    <property type="term" value="F:translation elongation factor activity"/>
    <property type="evidence" value="ECO:0007669"/>
    <property type="project" value="UniProtKB-UniRule"/>
</dbReference>
<dbReference type="CDD" id="cd01884">
    <property type="entry name" value="EF_Tu"/>
    <property type="match status" value="1"/>
</dbReference>
<dbReference type="CDD" id="cd03697">
    <property type="entry name" value="EFTU_II"/>
    <property type="match status" value="1"/>
</dbReference>
<dbReference type="CDD" id="cd03707">
    <property type="entry name" value="EFTU_III"/>
    <property type="match status" value="1"/>
</dbReference>
<dbReference type="FunFam" id="2.40.30.10:FF:000001">
    <property type="entry name" value="Elongation factor Tu"/>
    <property type="match status" value="1"/>
</dbReference>
<dbReference type="FunFam" id="3.40.50.300:FF:000003">
    <property type="entry name" value="Elongation factor Tu"/>
    <property type="match status" value="1"/>
</dbReference>
<dbReference type="Gene3D" id="3.40.50.300">
    <property type="entry name" value="P-loop containing nucleotide triphosphate hydrolases"/>
    <property type="match status" value="1"/>
</dbReference>
<dbReference type="Gene3D" id="2.40.30.10">
    <property type="entry name" value="Translation factors"/>
    <property type="match status" value="2"/>
</dbReference>
<dbReference type="HAMAP" id="MF_00118_B">
    <property type="entry name" value="EF_Tu_B"/>
    <property type="match status" value="1"/>
</dbReference>
<dbReference type="InterPro" id="IPR041709">
    <property type="entry name" value="EF-Tu_GTP-bd"/>
</dbReference>
<dbReference type="InterPro" id="IPR050055">
    <property type="entry name" value="EF-Tu_GTPase"/>
</dbReference>
<dbReference type="InterPro" id="IPR004161">
    <property type="entry name" value="EFTu-like_2"/>
</dbReference>
<dbReference type="InterPro" id="IPR033720">
    <property type="entry name" value="EFTU_2"/>
</dbReference>
<dbReference type="InterPro" id="IPR031157">
    <property type="entry name" value="G_TR_CS"/>
</dbReference>
<dbReference type="InterPro" id="IPR027417">
    <property type="entry name" value="P-loop_NTPase"/>
</dbReference>
<dbReference type="InterPro" id="IPR005225">
    <property type="entry name" value="Small_GTP-bd"/>
</dbReference>
<dbReference type="InterPro" id="IPR000795">
    <property type="entry name" value="T_Tr_GTP-bd_dom"/>
</dbReference>
<dbReference type="InterPro" id="IPR009000">
    <property type="entry name" value="Transl_B-barrel_sf"/>
</dbReference>
<dbReference type="InterPro" id="IPR009001">
    <property type="entry name" value="Transl_elong_EF1A/Init_IF2_C"/>
</dbReference>
<dbReference type="InterPro" id="IPR004541">
    <property type="entry name" value="Transl_elong_EFTu/EF1A_bac/org"/>
</dbReference>
<dbReference type="InterPro" id="IPR004160">
    <property type="entry name" value="Transl_elong_EFTu/EF1A_C"/>
</dbReference>
<dbReference type="NCBIfam" id="TIGR00485">
    <property type="entry name" value="EF-Tu"/>
    <property type="match status" value="1"/>
</dbReference>
<dbReference type="NCBIfam" id="NF000766">
    <property type="entry name" value="PRK00049.1"/>
    <property type="match status" value="1"/>
</dbReference>
<dbReference type="NCBIfam" id="NF009372">
    <property type="entry name" value="PRK12735.1"/>
    <property type="match status" value="1"/>
</dbReference>
<dbReference type="NCBIfam" id="NF009373">
    <property type="entry name" value="PRK12736.1"/>
    <property type="match status" value="1"/>
</dbReference>
<dbReference type="NCBIfam" id="TIGR00231">
    <property type="entry name" value="small_GTP"/>
    <property type="match status" value="1"/>
</dbReference>
<dbReference type="PANTHER" id="PTHR43721:SF22">
    <property type="entry name" value="ELONGATION FACTOR TU, MITOCHONDRIAL"/>
    <property type="match status" value="1"/>
</dbReference>
<dbReference type="PANTHER" id="PTHR43721">
    <property type="entry name" value="ELONGATION FACTOR TU-RELATED"/>
    <property type="match status" value="1"/>
</dbReference>
<dbReference type="Pfam" id="PF00009">
    <property type="entry name" value="GTP_EFTU"/>
    <property type="match status" value="1"/>
</dbReference>
<dbReference type="Pfam" id="PF03144">
    <property type="entry name" value="GTP_EFTU_D2"/>
    <property type="match status" value="1"/>
</dbReference>
<dbReference type="Pfam" id="PF03143">
    <property type="entry name" value="GTP_EFTU_D3"/>
    <property type="match status" value="1"/>
</dbReference>
<dbReference type="PRINTS" id="PR00315">
    <property type="entry name" value="ELONGATNFCT"/>
</dbReference>
<dbReference type="SUPFAM" id="SSF50465">
    <property type="entry name" value="EF-Tu/eEF-1alpha/eIF2-gamma C-terminal domain"/>
    <property type="match status" value="1"/>
</dbReference>
<dbReference type="SUPFAM" id="SSF52540">
    <property type="entry name" value="P-loop containing nucleoside triphosphate hydrolases"/>
    <property type="match status" value="1"/>
</dbReference>
<dbReference type="SUPFAM" id="SSF50447">
    <property type="entry name" value="Translation proteins"/>
    <property type="match status" value="1"/>
</dbReference>
<dbReference type="PROSITE" id="PS00301">
    <property type="entry name" value="G_TR_1"/>
    <property type="match status" value="1"/>
</dbReference>
<dbReference type="PROSITE" id="PS51722">
    <property type="entry name" value="G_TR_2"/>
    <property type="match status" value="1"/>
</dbReference>
<name>EFTU_IDILO</name>
<protein>
    <recommendedName>
        <fullName evidence="2">Elongation factor Tu</fullName>
        <shortName evidence="2">EF-Tu</shortName>
        <ecNumber evidence="2">3.6.5.3</ecNumber>
    </recommendedName>
</protein>
<evidence type="ECO:0000250" key="1"/>
<evidence type="ECO:0000255" key="2">
    <source>
        <dbReference type="HAMAP-Rule" id="MF_00118"/>
    </source>
</evidence>
<proteinExistence type="inferred from homology"/>
<keyword id="KW-0963">Cytoplasm</keyword>
<keyword id="KW-0251">Elongation factor</keyword>
<keyword id="KW-0342">GTP-binding</keyword>
<keyword id="KW-0378">Hydrolase</keyword>
<keyword id="KW-0460">Magnesium</keyword>
<keyword id="KW-0479">Metal-binding</keyword>
<keyword id="KW-0547">Nucleotide-binding</keyword>
<keyword id="KW-0648">Protein biosynthesis</keyword>
<keyword id="KW-1185">Reference proteome</keyword>